<comment type="function">
    <text evidence="1">Plays a role in the ciliary Hedgehog (Hh) signaling.</text>
</comment>
<comment type="subcellular location">
    <subcellularLocation>
        <location evidence="1">Cell projection</location>
        <location evidence="1">Cilium membrane</location>
        <topology evidence="1">Peripheral membrane protein</topology>
        <orientation evidence="1">Cytoplasmic side</orientation>
    </subcellularLocation>
</comment>
<gene>
    <name type="primary">efcab7</name>
</gene>
<keyword id="KW-0106">Calcium</keyword>
<keyword id="KW-1003">Cell membrane</keyword>
<keyword id="KW-0966">Cell projection</keyword>
<keyword id="KW-0472">Membrane</keyword>
<keyword id="KW-0479">Metal-binding</keyword>
<keyword id="KW-1185">Reference proteome</keyword>
<keyword id="KW-0677">Repeat</keyword>
<evidence type="ECO:0000250" key="1">
    <source>
        <dbReference type="UniProtKB" id="Q8VDY4"/>
    </source>
</evidence>
<evidence type="ECO:0000255" key="2">
    <source>
        <dbReference type="PROSITE-ProRule" id="PRU00448"/>
    </source>
</evidence>
<evidence type="ECO:0000256" key="3">
    <source>
        <dbReference type="SAM" id="MobiDB-lite"/>
    </source>
</evidence>
<reference key="1">
    <citation type="submission" date="2004-07" db="EMBL/GenBank/DDBJ databases">
        <authorList>
            <consortium name="NIH - Xenopus Gene Collection (XGC) project"/>
        </authorList>
    </citation>
    <scope>NUCLEOTIDE SEQUENCE [LARGE SCALE MRNA]</scope>
    <source>
        <tissue>Embryo</tissue>
    </source>
</reference>
<name>EFCB7_XENLA</name>
<accession>Q6DCF6</accession>
<dbReference type="EMBL" id="BC078089">
    <property type="protein sequence ID" value="AAH78089.1"/>
    <property type="molecule type" value="mRNA"/>
</dbReference>
<dbReference type="RefSeq" id="NP_001087154.1">
    <property type="nucleotide sequence ID" value="NM_001093685.1"/>
</dbReference>
<dbReference type="SMR" id="Q6DCF6"/>
<dbReference type="IntAct" id="Q6DCF6">
    <property type="interactions" value="1"/>
</dbReference>
<dbReference type="DNASU" id="447043"/>
<dbReference type="GeneID" id="447043"/>
<dbReference type="KEGG" id="xla:447043"/>
<dbReference type="AGR" id="Xenbase:XB-GENE-5749177"/>
<dbReference type="CTD" id="447043"/>
<dbReference type="Xenbase" id="XB-GENE-5749177">
    <property type="gene designation" value="efcab7.L"/>
</dbReference>
<dbReference type="OrthoDB" id="26525at2759"/>
<dbReference type="Proteomes" id="UP000186698">
    <property type="component" value="Chromosome 4L"/>
</dbReference>
<dbReference type="Bgee" id="447043">
    <property type="expression patterns" value="Expressed in testis and 19 other cell types or tissues"/>
</dbReference>
<dbReference type="GO" id="GO:0060170">
    <property type="term" value="C:ciliary membrane"/>
    <property type="evidence" value="ECO:0000250"/>
    <property type="project" value="UniProtKB"/>
</dbReference>
<dbReference type="GO" id="GO:0098797">
    <property type="term" value="C:plasma membrane protein complex"/>
    <property type="evidence" value="ECO:0000318"/>
    <property type="project" value="GO_Central"/>
</dbReference>
<dbReference type="GO" id="GO:0005509">
    <property type="term" value="F:calcium ion binding"/>
    <property type="evidence" value="ECO:0007669"/>
    <property type="project" value="InterPro"/>
</dbReference>
<dbReference type="GO" id="GO:1903569">
    <property type="term" value="P:positive regulation of protein localization to ciliary membrane"/>
    <property type="evidence" value="ECO:0000318"/>
    <property type="project" value="GO_Central"/>
</dbReference>
<dbReference type="CDD" id="cd00051">
    <property type="entry name" value="EFh"/>
    <property type="match status" value="1"/>
</dbReference>
<dbReference type="FunFam" id="1.10.238.10:FF:000193">
    <property type="entry name" value="EF-hand calcium-binding domain-containing protein 7"/>
    <property type="match status" value="1"/>
</dbReference>
<dbReference type="Gene3D" id="1.10.238.10">
    <property type="entry name" value="EF-hand"/>
    <property type="match status" value="2"/>
</dbReference>
<dbReference type="InterPro" id="IPR011992">
    <property type="entry name" value="EF-hand-dom_pair"/>
</dbReference>
<dbReference type="InterPro" id="IPR018247">
    <property type="entry name" value="EF_Hand_1_Ca_BS"/>
</dbReference>
<dbReference type="InterPro" id="IPR002048">
    <property type="entry name" value="EF_hand_dom"/>
</dbReference>
<dbReference type="InterPro" id="IPR052266">
    <property type="entry name" value="Miro-EF-hand_domain"/>
</dbReference>
<dbReference type="PANTHER" id="PTHR46819">
    <property type="entry name" value="EF-HAND CALCIUM-BINDING DOMAIN-CONTAINING PROTEIN 7"/>
    <property type="match status" value="1"/>
</dbReference>
<dbReference type="PANTHER" id="PTHR46819:SF1">
    <property type="entry name" value="EF-HAND CALCIUM-BINDING DOMAIN-CONTAINING PROTEIN 7"/>
    <property type="match status" value="1"/>
</dbReference>
<dbReference type="Pfam" id="PF13499">
    <property type="entry name" value="EF-hand_7"/>
    <property type="match status" value="1"/>
</dbReference>
<dbReference type="SMART" id="SM00054">
    <property type="entry name" value="EFh"/>
    <property type="match status" value="3"/>
</dbReference>
<dbReference type="SUPFAM" id="SSF47473">
    <property type="entry name" value="EF-hand"/>
    <property type="match status" value="1"/>
</dbReference>
<dbReference type="PROSITE" id="PS00018">
    <property type="entry name" value="EF_HAND_1"/>
    <property type="match status" value="1"/>
</dbReference>
<dbReference type="PROSITE" id="PS50222">
    <property type="entry name" value="EF_HAND_2"/>
    <property type="match status" value="3"/>
</dbReference>
<feature type="chain" id="PRO_0000317268" description="EF-hand calcium-binding domain-containing protein 7">
    <location>
        <begin position="1"/>
        <end position="620"/>
    </location>
</feature>
<feature type="domain" description="EF-hand 1" evidence="2">
    <location>
        <begin position="98"/>
        <end position="133"/>
    </location>
</feature>
<feature type="domain" description="EF-hand 2" evidence="2">
    <location>
        <begin position="134"/>
        <end position="169"/>
    </location>
</feature>
<feature type="domain" description="EF-hand 3" evidence="2">
    <location>
        <begin position="394"/>
        <end position="429"/>
    </location>
</feature>
<feature type="region of interest" description="Disordered" evidence="3">
    <location>
        <begin position="1"/>
        <end position="24"/>
    </location>
</feature>
<feature type="region of interest" description="Disordered" evidence="3">
    <location>
        <begin position="176"/>
        <end position="234"/>
    </location>
</feature>
<feature type="compositionally biased region" description="Basic and acidic residues" evidence="3">
    <location>
        <begin position="213"/>
        <end position="225"/>
    </location>
</feature>
<feature type="binding site" evidence="2">
    <location>
        <position position="407"/>
    </location>
    <ligand>
        <name>Ca(2+)</name>
        <dbReference type="ChEBI" id="CHEBI:29108"/>
    </ligand>
</feature>
<feature type="binding site" evidence="2">
    <location>
        <position position="409"/>
    </location>
    <ligand>
        <name>Ca(2+)</name>
        <dbReference type="ChEBI" id="CHEBI:29108"/>
    </ligand>
</feature>
<feature type="binding site" evidence="2">
    <location>
        <position position="411"/>
    </location>
    <ligand>
        <name>Ca(2+)</name>
        <dbReference type="ChEBI" id="CHEBI:29108"/>
    </ligand>
</feature>
<feature type="binding site" evidence="2">
    <location>
        <position position="418"/>
    </location>
    <ligand>
        <name>Ca(2+)</name>
        <dbReference type="ChEBI" id="CHEBI:29108"/>
    </ligand>
</feature>
<sequence length="620" mass="70810">MANHSSLPSQKYAASERQEYQKPQQNEEEIFYSVSRAAYLTVFKSSLDNITTKDQLQLVLQQTGRNPSNRVLNKYWTPRTKELNFDDFCAILKKEKPATKNELLKAFRKIDTNNKGYILHNDLYEILTTKGEKMSQEEVNSVFRLAEVNSNGKLDYNKFCSTFFKTCEQCAKVASERMDSNSKAKRQQFGSYIEKSPERSSSPKSSHGNLKLFDSETSTRKENKSSRPSSARSYKATMSTVINMGIPGTRTAKLIEPNNLKDWHTTSTKGCFFLEDNGDIISHHYKLQVSEKSTVYLTIKPLNLSKVEGKPSPWMSVDTSLFILKENNGRADLVSFTELRNQETSGWKGELGVGVYWLIPFTTGCRLRKKKKQTIKEARLVYRDGNEDLVLTPEFKSALSDMFDIIDLDGNGLLSLAEYNFFEMRTSGEKCDLDAWEVCKENFETKKNELTRQGFMELNLMEANDREGDPSDLWVTLQTMGYNKALEMTEACPFVIEVHAEKCSPRLKAVSLESSNKQLQGAVCKSVKLKGDAKPMDRYEDVIVYTYKNDTHVTSVMENKSDEKLILQVNNEQCKNCISSRGLQVFAVELLPKSVMVCQHVMPLNEKQEWMYNCVQNILS</sequence>
<organism>
    <name type="scientific">Xenopus laevis</name>
    <name type="common">African clawed frog</name>
    <dbReference type="NCBI Taxonomy" id="8355"/>
    <lineage>
        <taxon>Eukaryota</taxon>
        <taxon>Metazoa</taxon>
        <taxon>Chordata</taxon>
        <taxon>Craniata</taxon>
        <taxon>Vertebrata</taxon>
        <taxon>Euteleostomi</taxon>
        <taxon>Amphibia</taxon>
        <taxon>Batrachia</taxon>
        <taxon>Anura</taxon>
        <taxon>Pipoidea</taxon>
        <taxon>Pipidae</taxon>
        <taxon>Xenopodinae</taxon>
        <taxon>Xenopus</taxon>
        <taxon>Xenopus</taxon>
    </lineage>
</organism>
<proteinExistence type="evidence at transcript level"/>
<protein>
    <recommendedName>
        <fullName>EF-hand calcium-binding domain-containing protein 7</fullName>
    </recommendedName>
</protein>